<protein>
    <recommendedName>
        <fullName evidence="1">UPF0178 protein BT9727_2823</fullName>
    </recommendedName>
</protein>
<feature type="chain" id="PRO_0000175961" description="UPF0178 protein BT9727_2823">
    <location>
        <begin position="1"/>
        <end position="146"/>
    </location>
</feature>
<proteinExistence type="inferred from homology"/>
<organism>
    <name type="scientific">Bacillus thuringiensis subsp. konkukian (strain 97-27)</name>
    <dbReference type="NCBI Taxonomy" id="281309"/>
    <lineage>
        <taxon>Bacteria</taxon>
        <taxon>Bacillati</taxon>
        <taxon>Bacillota</taxon>
        <taxon>Bacilli</taxon>
        <taxon>Bacillales</taxon>
        <taxon>Bacillaceae</taxon>
        <taxon>Bacillus</taxon>
        <taxon>Bacillus cereus group</taxon>
    </lineage>
</organism>
<reference key="1">
    <citation type="journal article" date="2006" name="J. Bacteriol.">
        <title>Pathogenomic sequence analysis of Bacillus cereus and Bacillus thuringiensis isolates closely related to Bacillus anthracis.</title>
        <authorList>
            <person name="Han C.S."/>
            <person name="Xie G."/>
            <person name="Challacombe J.F."/>
            <person name="Altherr M.R."/>
            <person name="Bhotika S.S."/>
            <person name="Bruce D."/>
            <person name="Campbell C.S."/>
            <person name="Campbell M.L."/>
            <person name="Chen J."/>
            <person name="Chertkov O."/>
            <person name="Cleland C."/>
            <person name="Dimitrijevic M."/>
            <person name="Doggett N.A."/>
            <person name="Fawcett J.J."/>
            <person name="Glavina T."/>
            <person name="Goodwin L.A."/>
            <person name="Hill K.K."/>
            <person name="Hitchcock P."/>
            <person name="Jackson P.J."/>
            <person name="Keim P."/>
            <person name="Kewalramani A.R."/>
            <person name="Longmire J."/>
            <person name="Lucas S."/>
            <person name="Malfatti S."/>
            <person name="McMurry K."/>
            <person name="Meincke L.J."/>
            <person name="Misra M."/>
            <person name="Moseman B.L."/>
            <person name="Mundt M."/>
            <person name="Munk A.C."/>
            <person name="Okinaka R.T."/>
            <person name="Parson-Quintana B."/>
            <person name="Reilly L.P."/>
            <person name="Richardson P."/>
            <person name="Robinson D.L."/>
            <person name="Rubin E."/>
            <person name="Saunders E."/>
            <person name="Tapia R."/>
            <person name="Tesmer J.G."/>
            <person name="Thayer N."/>
            <person name="Thompson L.S."/>
            <person name="Tice H."/>
            <person name="Ticknor L.O."/>
            <person name="Wills P.L."/>
            <person name="Brettin T.S."/>
            <person name="Gilna P."/>
        </authorList>
    </citation>
    <scope>NUCLEOTIDE SEQUENCE [LARGE SCALE GENOMIC DNA]</scope>
    <source>
        <strain>97-27</strain>
    </source>
</reference>
<comment type="similarity">
    <text evidence="1">Belongs to the UPF0178 family.</text>
</comment>
<sequence>MKIYVDADACPVKDVIIFEATKAEIPVTLVTSFSHYSNAEQPKGVETIYVDSGADAADYRIMQLAQKEDLIVTQDYGLASLALAKGCIVLHHKGYKYTNENIDQLLQTRYLSAMVRKSGKRTKGPKPFTAEDKEKFRALFKSMIPL</sequence>
<accession>Q6HH29</accession>
<dbReference type="EMBL" id="AE017355">
    <property type="protein sequence ID" value="AAT60179.1"/>
    <property type="molecule type" value="Genomic_DNA"/>
</dbReference>
<dbReference type="RefSeq" id="WP_000708755.1">
    <property type="nucleotide sequence ID" value="NC_005957.1"/>
</dbReference>
<dbReference type="RefSeq" id="YP_037147.1">
    <property type="nucleotide sequence ID" value="NC_005957.1"/>
</dbReference>
<dbReference type="KEGG" id="btk:BT9727_2823"/>
<dbReference type="PATRIC" id="fig|281309.8.peg.2995"/>
<dbReference type="HOGENOM" id="CLU_106619_0_0_9"/>
<dbReference type="Proteomes" id="UP000001301">
    <property type="component" value="Chromosome"/>
</dbReference>
<dbReference type="HAMAP" id="MF_00489">
    <property type="entry name" value="UPF0178"/>
    <property type="match status" value="1"/>
</dbReference>
<dbReference type="InterPro" id="IPR003791">
    <property type="entry name" value="UPF0178"/>
</dbReference>
<dbReference type="NCBIfam" id="NF001095">
    <property type="entry name" value="PRK00124.1"/>
    <property type="match status" value="1"/>
</dbReference>
<dbReference type="PANTHER" id="PTHR35146">
    <property type="entry name" value="UPF0178 PROTEIN YAII"/>
    <property type="match status" value="1"/>
</dbReference>
<dbReference type="PANTHER" id="PTHR35146:SF1">
    <property type="entry name" value="UPF0178 PROTEIN YAII"/>
    <property type="match status" value="1"/>
</dbReference>
<dbReference type="Pfam" id="PF02639">
    <property type="entry name" value="DUF188"/>
    <property type="match status" value="1"/>
</dbReference>
<name>Y2823_BACHK</name>
<evidence type="ECO:0000255" key="1">
    <source>
        <dbReference type="HAMAP-Rule" id="MF_00489"/>
    </source>
</evidence>
<gene>
    <name type="ordered locus">BT9727_2823</name>
</gene>